<feature type="signal peptide" evidence="2">
    <location>
        <begin position="1"/>
        <end position="23"/>
    </location>
</feature>
<feature type="chain" id="PRO_0000006954" description="Beta-defensin 50">
    <location>
        <begin position="24"/>
        <end position="73"/>
    </location>
</feature>
<feature type="disulfide bond" evidence="1">
    <location>
        <begin position="34"/>
        <end position="63"/>
    </location>
</feature>
<feature type="disulfide bond" evidence="1">
    <location>
        <begin position="46"/>
        <end position="64"/>
    </location>
</feature>
<name>DFB50_MOUSE</name>
<evidence type="ECO:0000250" key="1"/>
<evidence type="ECO:0000255" key="2"/>
<evidence type="ECO:0000269" key="3">
    <source>
    </source>
</evidence>
<evidence type="ECO:0000305" key="4"/>
<keyword id="KW-0044">Antibiotic</keyword>
<keyword id="KW-0929">Antimicrobial</keyword>
<keyword id="KW-0211">Defensin</keyword>
<keyword id="KW-1015">Disulfide bond</keyword>
<keyword id="KW-1185">Reference proteome</keyword>
<keyword id="KW-0964">Secreted</keyword>
<keyword id="KW-0732">Signal</keyword>
<sequence>MKTLCFLLLTSGLLYLMVKGVGSHPGTFHVRIKCMPKMTAVFGDNCSFYSSMGDLCNNTKSVCCMVPVRMDNI</sequence>
<gene>
    <name type="primary">Defb50</name>
    <name type="synonym">Defb37</name>
    <name type="synonym">Pbd1</name>
</gene>
<organism>
    <name type="scientific">Mus musculus</name>
    <name type="common">Mouse</name>
    <dbReference type="NCBI Taxonomy" id="10090"/>
    <lineage>
        <taxon>Eukaryota</taxon>
        <taxon>Metazoa</taxon>
        <taxon>Chordata</taxon>
        <taxon>Craniata</taxon>
        <taxon>Vertebrata</taxon>
        <taxon>Euteleostomi</taxon>
        <taxon>Mammalia</taxon>
        <taxon>Eutheria</taxon>
        <taxon>Euarchontoglires</taxon>
        <taxon>Glires</taxon>
        <taxon>Rodentia</taxon>
        <taxon>Myomorpha</taxon>
        <taxon>Muroidea</taxon>
        <taxon>Muridae</taxon>
        <taxon>Murinae</taxon>
        <taxon>Mus</taxon>
        <taxon>Mus</taxon>
    </lineage>
</organism>
<dbReference type="EMBL" id="AY387658">
    <property type="protein sequence ID" value="AAR25850.1"/>
    <property type="molecule type" value="mRNA"/>
</dbReference>
<dbReference type="EMBL" id="DQ012050">
    <property type="protein sequence ID" value="AAY59783.1"/>
    <property type="molecule type" value="mRNA"/>
</dbReference>
<dbReference type="EMBL" id="AY621336">
    <property type="protein sequence ID" value="AAT51875.1"/>
    <property type="molecule type" value="mRNA"/>
</dbReference>
<dbReference type="EMBL" id="AL590630">
    <property type="status" value="NOT_ANNOTATED_CDS"/>
    <property type="molecule type" value="Genomic_DNA"/>
</dbReference>
<dbReference type="CCDS" id="CCDS40283.1"/>
<dbReference type="RefSeq" id="NP_951022.1">
    <property type="nucleotide sequence ID" value="NM_199067.2"/>
</dbReference>
<dbReference type="STRING" id="10090.ENSMUSP00000077918"/>
<dbReference type="PaxDb" id="10090-ENSMUSP00000077918"/>
<dbReference type="ProteomicsDB" id="279641"/>
<dbReference type="DNASU" id="387334"/>
<dbReference type="Ensembl" id="ENSMUST00000078879.7">
    <property type="protein sequence ID" value="ENSMUSP00000077918.7"/>
    <property type="gene ID" value="ENSMUSG00000058568.7"/>
</dbReference>
<dbReference type="GeneID" id="387334"/>
<dbReference type="KEGG" id="mmu:387334"/>
<dbReference type="UCSC" id="uc009lbz.1">
    <property type="organism name" value="mouse"/>
</dbReference>
<dbReference type="AGR" id="MGI:3055870"/>
<dbReference type="CTD" id="387334"/>
<dbReference type="MGI" id="MGI:3055870">
    <property type="gene designation" value="Defb50"/>
</dbReference>
<dbReference type="VEuPathDB" id="HostDB:ENSMUSG00000058568"/>
<dbReference type="GeneTree" id="ENSGT00520000061209"/>
<dbReference type="HOGENOM" id="CLU_2704193_0_0_1"/>
<dbReference type="InParanoid" id="Q6TU36"/>
<dbReference type="OMA" id="KSVCCMV"/>
<dbReference type="OrthoDB" id="9612738at2759"/>
<dbReference type="BioGRID-ORCS" id="387334">
    <property type="hits" value="1 hit in 77 CRISPR screens"/>
</dbReference>
<dbReference type="ChiTaRS" id="Defb50">
    <property type="organism name" value="mouse"/>
</dbReference>
<dbReference type="PRO" id="PR:Q6TU36"/>
<dbReference type="Proteomes" id="UP000000589">
    <property type="component" value="Chromosome 8"/>
</dbReference>
<dbReference type="RNAct" id="Q6TU36">
    <property type="molecule type" value="protein"/>
</dbReference>
<dbReference type="Bgee" id="ENSMUSG00000058568">
    <property type="expression patterns" value="Expressed in primary oocyte and 9 other cell types or tissues"/>
</dbReference>
<dbReference type="GO" id="GO:0005576">
    <property type="term" value="C:extracellular region"/>
    <property type="evidence" value="ECO:0007669"/>
    <property type="project" value="UniProtKB-SubCell"/>
</dbReference>
<dbReference type="GO" id="GO:0042742">
    <property type="term" value="P:defense response to bacterium"/>
    <property type="evidence" value="ECO:0007669"/>
    <property type="project" value="UniProtKB-KW"/>
</dbReference>
<dbReference type="InterPro" id="IPR035193">
    <property type="entry name" value="Defb50"/>
</dbReference>
<dbReference type="Pfam" id="PF17546">
    <property type="entry name" value="Defb50"/>
    <property type="match status" value="1"/>
</dbReference>
<proteinExistence type="evidence at transcript level"/>
<protein>
    <recommendedName>
        <fullName>Beta-defensin 50</fullName>
        <shortName>BD-50</shortName>
        <shortName>mBD-50</shortName>
    </recommendedName>
    <alternativeName>
        <fullName>Defensin, beta 37</fullName>
    </alternativeName>
    <alternativeName>
        <fullName>Defensin, beta 50</fullName>
    </alternativeName>
    <alternativeName>
        <fullName>Prostate beta-defensin 1</fullName>
    </alternativeName>
</protein>
<comment type="function">
    <text evidence="1">Has bactericidal activity.</text>
</comment>
<comment type="subcellular location">
    <subcellularLocation>
        <location evidence="1">Secreted</location>
    </subcellularLocation>
</comment>
<comment type="tissue specificity">
    <text evidence="3">Highly expressed in prostate. Not expressed in uterus, epididymis, ovary, testis, spleen, submaxillary gland, thymus, thyroid, pancreas, smooth muscle, skeletal muscle, heart, kidney, lung, liver, eye and brain.</text>
</comment>
<comment type="similarity">
    <text evidence="4">Belongs to the beta-defensin family.</text>
</comment>
<accession>Q6TU36</accession>
<accession>Q30KM7</accession>
<reference key="1">
    <citation type="journal article" date="2003" name="Genome Biol.">
        <title>Expressed sequence tag profiling identifies developmental and anatomic partitioning of gene expression in the mouse prostate.</title>
        <authorList>
            <person name="Abbott D.E."/>
            <person name="Pritchard C."/>
            <person name="Clegg N.J."/>
            <person name="Ferguson C."/>
            <person name="Dumpit R."/>
            <person name="Sikes R.A."/>
            <person name="Nelson P.S."/>
        </authorList>
    </citation>
    <scope>NUCLEOTIDE SEQUENCE [MRNA]</scope>
    <scope>TISSUE SPECIFICITY</scope>
    <source>
        <tissue>Prostate</tissue>
    </source>
</reference>
<reference key="2">
    <citation type="journal article" date="2005" name="Physiol. Genomics">
        <title>Cross-species analysis of the mammalian beta-defensin gene family: presence of syntenic gene clusters and preferential expression in the male reproductive tract.</title>
        <authorList>
            <person name="Patil A.A."/>
            <person name="Cai Y."/>
            <person name="Sang Y."/>
            <person name="Blecha F."/>
            <person name="Zhang G."/>
        </authorList>
    </citation>
    <scope>NUCLEOTIDE SEQUENCE [MRNA]</scope>
</reference>
<reference key="3">
    <citation type="submission" date="2004-05" db="EMBL/GenBank/DDBJ databases">
        <title>Genome-wide analysis of rat beta-defensins: evidence for the existence of four syntenic defensin gene clusters in mammals.</title>
        <authorList>
            <person name="Patil A.A."/>
            <person name="Zhang G."/>
        </authorList>
    </citation>
    <scope>NUCLEOTIDE SEQUENCE [MRNA]</scope>
</reference>
<reference key="4">
    <citation type="journal article" date="2009" name="PLoS Biol.">
        <title>Lineage-specific biology revealed by a finished genome assembly of the mouse.</title>
        <authorList>
            <person name="Church D.M."/>
            <person name="Goodstadt L."/>
            <person name="Hillier L.W."/>
            <person name="Zody M.C."/>
            <person name="Goldstein S."/>
            <person name="She X."/>
            <person name="Bult C.J."/>
            <person name="Agarwala R."/>
            <person name="Cherry J.L."/>
            <person name="DiCuccio M."/>
            <person name="Hlavina W."/>
            <person name="Kapustin Y."/>
            <person name="Meric P."/>
            <person name="Maglott D."/>
            <person name="Birtle Z."/>
            <person name="Marques A.C."/>
            <person name="Graves T."/>
            <person name="Zhou S."/>
            <person name="Teague B."/>
            <person name="Potamousis K."/>
            <person name="Churas C."/>
            <person name="Place M."/>
            <person name="Herschleb J."/>
            <person name="Runnheim R."/>
            <person name="Forrest D."/>
            <person name="Amos-Landgraf J."/>
            <person name="Schwartz D.C."/>
            <person name="Cheng Z."/>
            <person name="Lindblad-Toh K."/>
            <person name="Eichler E.E."/>
            <person name="Ponting C.P."/>
        </authorList>
    </citation>
    <scope>NUCLEOTIDE SEQUENCE [LARGE SCALE GENOMIC DNA]</scope>
    <source>
        <strain>C57BL/6J</strain>
    </source>
</reference>